<organismHost>
    <name type="scientific">Homo sapiens</name>
    <name type="common">Human</name>
    <dbReference type="NCBI Taxonomy" id="9606"/>
</organismHost>
<evidence type="ECO:0000250" key="1">
    <source>
        <dbReference type="UniProtKB" id="P0DKA0"/>
    </source>
</evidence>
<evidence type="ECO:0000256" key="2">
    <source>
        <dbReference type="SAM" id="MobiDB-lite"/>
    </source>
</evidence>
<evidence type="ECO:0000305" key="3"/>
<dbReference type="EMBL" id="D90400">
    <property type="status" value="NOT_ANNOTATED_CDS"/>
    <property type="molecule type" value="Genomic_DNA"/>
</dbReference>
<dbReference type="SMR" id="P0DKB2"/>
<dbReference type="Proteomes" id="UP000007668">
    <property type="component" value="Genome"/>
</dbReference>
<dbReference type="GO" id="GO:0042025">
    <property type="term" value="C:host cell nucleus"/>
    <property type="evidence" value="ECO:0007669"/>
    <property type="project" value="UniProtKB-SubCell"/>
</dbReference>
<dbReference type="GO" id="GO:0003677">
    <property type="term" value="F:DNA binding"/>
    <property type="evidence" value="ECO:0007669"/>
    <property type="project" value="InterPro"/>
</dbReference>
<dbReference type="GO" id="GO:0003700">
    <property type="term" value="F:DNA-binding transcription factor activity"/>
    <property type="evidence" value="ECO:0007669"/>
    <property type="project" value="InterPro"/>
</dbReference>
<dbReference type="GO" id="GO:0006275">
    <property type="term" value="P:regulation of DNA replication"/>
    <property type="evidence" value="ECO:0007669"/>
    <property type="project" value="InterPro"/>
</dbReference>
<dbReference type="Gene3D" id="3.30.70.330">
    <property type="match status" value="1"/>
</dbReference>
<dbReference type="InterPro" id="IPR035975">
    <property type="entry name" value="E2/EBNA1_C_sf"/>
</dbReference>
<dbReference type="InterPro" id="IPR012677">
    <property type="entry name" value="Nucleotide-bd_a/b_plait_sf"/>
</dbReference>
<dbReference type="InterPro" id="IPR000427">
    <property type="entry name" value="Papillomavirus_E2_C"/>
</dbReference>
<dbReference type="Pfam" id="PF00511">
    <property type="entry name" value="PPV_E2_C"/>
    <property type="match status" value="1"/>
</dbReference>
<dbReference type="SUPFAM" id="SSF54957">
    <property type="entry name" value="Viral DNA-binding domain"/>
    <property type="match status" value="1"/>
</dbReference>
<organism>
    <name type="scientific">Human papillomavirus 58</name>
    <dbReference type="NCBI Taxonomy" id="10598"/>
    <lineage>
        <taxon>Viruses</taxon>
        <taxon>Monodnaviria</taxon>
        <taxon>Shotokuvirae</taxon>
        <taxon>Cossaviricota</taxon>
        <taxon>Papovaviricetes</taxon>
        <taxon>Zurhausenvirales</taxon>
        <taxon>Papillomaviridae</taxon>
        <taxon>Firstpapillomavirinae</taxon>
        <taxon>Alphapapillomavirus</taxon>
        <taxon>Alphapapillomavirus 9</taxon>
    </lineage>
</organism>
<keyword id="KW-1048">Host nucleus</keyword>
<feature type="chain" id="PRO_0000438753" description="Protein E8^E2C">
    <location>
        <begin position="1"/>
        <end position="171"/>
    </location>
</feature>
<feature type="region of interest" description="Disordered" evidence="2">
    <location>
        <begin position="15"/>
        <end position="54"/>
    </location>
</feature>
<feature type="compositionally biased region" description="Polar residues" evidence="2">
    <location>
        <begin position="28"/>
        <end position="38"/>
    </location>
</feature>
<sequence length="171" mass="19310">MAILKWKLSRWHTSDQISTTETADPKTTEATNNESTQGTKRRRLDLPDSRDNTQYSTKYTDCAVDSRPRGGGLHSTTNCTYKGRNVCSSKVSPIVHLKGDPNSLKCLRYRLKPFKDLYCNMSSTWHWTSDDKGDKVGIVTVTYTTETQRQLFLNTVKIPPTVQISTGVMSL</sequence>
<comment type="function">
    <text evidence="1">Plays a role in limiting the replication of viral DNA in keratinocytes. Recruits the host NCoR/SMRT complex to viral replication foci to mediate repression of both viral replication and transcription.</text>
</comment>
<comment type="subcellular location">
    <subcellularLocation>
        <location evidence="1">Host nucleus</location>
    </subcellularLocation>
</comment>
<comment type="similarity">
    <text evidence="3">Belongs to the papillomaviridae E8^E2C protein family.</text>
</comment>
<name>VE8E2_HPV58</name>
<protein>
    <recommendedName>
        <fullName>Protein E8^E2C</fullName>
    </recommendedName>
</protein>
<accession>P0DKB2</accession>
<reference key="1">
    <citation type="journal article" date="1991" name="Virology">
        <title>Human papillomavirus type 58 DNA sequence.</title>
        <authorList>
            <person name="Kirii Y."/>
            <person name="Iwamoto S."/>
            <person name="Matsukura T."/>
        </authorList>
    </citation>
    <scope>NUCLEOTIDE SEQUENCE [GENOMIC DNA]</scope>
</reference>
<proteinExistence type="inferred from homology"/>